<feature type="chain" id="PRO_0000168183" description="Chorion class B protein M1768">
    <location>
        <begin position="1" status="less than"/>
        <end position="126"/>
    </location>
</feature>
<feature type="region of interest" description="Left arm">
    <location>
        <begin position="1" status="less than"/>
        <end position="17"/>
    </location>
</feature>
<feature type="region of interest" description="Central domain">
    <location>
        <begin position="18"/>
        <end position="86"/>
    </location>
</feature>
<feature type="region of interest" description="Right arm (Gly-rich tandem repeats)">
    <location>
        <begin position="87"/>
        <end position="126"/>
    </location>
</feature>
<feature type="non-terminal residue">
    <location>
        <position position="1"/>
    </location>
</feature>
<evidence type="ECO:0000305" key="1"/>
<dbReference type="EMBL" id="X12839">
    <property type="protein sequence ID" value="CAA31324.1"/>
    <property type="molecule type" value="mRNA"/>
</dbReference>
<dbReference type="PIR" id="S04514">
    <property type="entry name" value="S04514"/>
</dbReference>
<dbReference type="InParanoid" id="P08916"/>
<dbReference type="Proteomes" id="UP000005204">
    <property type="component" value="Unassembled WGS sequence"/>
</dbReference>
<dbReference type="GO" id="GO:0042600">
    <property type="term" value="C:egg chorion"/>
    <property type="evidence" value="ECO:0007669"/>
    <property type="project" value="InterPro"/>
</dbReference>
<dbReference type="GO" id="GO:0005213">
    <property type="term" value="F:structural constituent of egg chorion"/>
    <property type="evidence" value="ECO:0007669"/>
    <property type="project" value="InterPro"/>
</dbReference>
<dbReference type="GO" id="GO:0007304">
    <property type="term" value="P:chorion-containing eggshell formation"/>
    <property type="evidence" value="ECO:0007669"/>
    <property type="project" value="InterPro"/>
</dbReference>
<dbReference type="InterPro" id="IPR002635">
    <property type="entry name" value="Chorion"/>
</dbReference>
<dbReference type="Pfam" id="PF01723">
    <property type="entry name" value="Chorion_1"/>
    <property type="match status" value="1"/>
</dbReference>
<proteinExistence type="evidence at transcript level"/>
<protein>
    <recommendedName>
        <fullName>Chorion class B protein M1768</fullName>
    </recommendedName>
</protein>
<sequence>YGGLGYGGLGGGCGRGFSGGGLPVATASAAPTGLGIASENRYEGTVGVSGNLPFLGTADVAGEFPTAGIGEIDYGCGNGAVGITREGGFGYGAGYGDGYGLGFGGYGGGYGLGYGGYGGCGCSWGY</sequence>
<accession>P08916</accession>
<name>CHB7_BOMMO</name>
<comment type="function">
    <text>This protein is one of many from the eggshell of the silk moth.</text>
</comment>
<comment type="similarity">
    <text evidence="1">Belongs to the chorion protein family.</text>
</comment>
<reference key="1">
    <citation type="journal article" date="1983" name="EMBO J.">
        <title>Structural features of B family chorion sequences in the silkmoth Bombyx mori, and their evolutionary implications.</title>
        <authorList>
            <person name="Tsitilou S.G."/>
            <person name="Rodakis G.C."/>
            <person name="Alexopoulou M."/>
            <person name="Kafatos F.C."/>
            <person name="Ito K."/>
            <person name="Iatrou K."/>
        </authorList>
    </citation>
    <scope>NUCLEOTIDE SEQUENCE [MRNA]</scope>
    <source>
        <strain>703</strain>
    </source>
</reference>
<keyword id="KW-1185">Reference proteome</keyword>
<keyword id="KW-0677">Repeat</keyword>
<organism>
    <name type="scientific">Bombyx mori</name>
    <name type="common">Silk moth</name>
    <dbReference type="NCBI Taxonomy" id="7091"/>
    <lineage>
        <taxon>Eukaryota</taxon>
        <taxon>Metazoa</taxon>
        <taxon>Ecdysozoa</taxon>
        <taxon>Arthropoda</taxon>
        <taxon>Hexapoda</taxon>
        <taxon>Insecta</taxon>
        <taxon>Pterygota</taxon>
        <taxon>Neoptera</taxon>
        <taxon>Endopterygota</taxon>
        <taxon>Lepidoptera</taxon>
        <taxon>Glossata</taxon>
        <taxon>Ditrysia</taxon>
        <taxon>Bombycoidea</taxon>
        <taxon>Bombycidae</taxon>
        <taxon>Bombycinae</taxon>
        <taxon>Bombyx</taxon>
    </lineage>
</organism>